<evidence type="ECO:0000255" key="1">
    <source>
        <dbReference type="HAMAP-Rule" id="MF_00206"/>
    </source>
</evidence>
<evidence type="ECO:0000255" key="2">
    <source>
        <dbReference type="PROSITE-ProRule" id="PRU01266"/>
    </source>
</evidence>
<comment type="function">
    <text evidence="1">Catalyzes the radical-mediated insertion of two sulfur atoms into the C-6 and C-8 positions of the octanoyl moiety bound to the lipoyl domains of lipoate-dependent enzymes, thereby converting the octanoylated domains into lipoylated derivatives.</text>
</comment>
<comment type="catalytic activity">
    <reaction evidence="1">
        <text>[[Fe-S] cluster scaffold protein carrying a second [4Fe-4S](2+) cluster] + N(6)-octanoyl-L-lysyl-[protein] + 2 oxidized [2Fe-2S]-[ferredoxin] + 2 S-adenosyl-L-methionine + 4 H(+) = [[Fe-S] cluster scaffold protein] + N(6)-[(R)-dihydrolipoyl]-L-lysyl-[protein] + 4 Fe(3+) + 2 hydrogen sulfide + 2 5'-deoxyadenosine + 2 L-methionine + 2 reduced [2Fe-2S]-[ferredoxin]</text>
        <dbReference type="Rhea" id="RHEA:16585"/>
        <dbReference type="Rhea" id="RHEA-COMP:9928"/>
        <dbReference type="Rhea" id="RHEA-COMP:10000"/>
        <dbReference type="Rhea" id="RHEA-COMP:10001"/>
        <dbReference type="Rhea" id="RHEA-COMP:10475"/>
        <dbReference type="Rhea" id="RHEA-COMP:14568"/>
        <dbReference type="Rhea" id="RHEA-COMP:14569"/>
        <dbReference type="ChEBI" id="CHEBI:15378"/>
        <dbReference type="ChEBI" id="CHEBI:17319"/>
        <dbReference type="ChEBI" id="CHEBI:29034"/>
        <dbReference type="ChEBI" id="CHEBI:29919"/>
        <dbReference type="ChEBI" id="CHEBI:33722"/>
        <dbReference type="ChEBI" id="CHEBI:33737"/>
        <dbReference type="ChEBI" id="CHEBI:33738"/>
        <dbReference type="ChEBI" id="CHEBI:57844"/>
        <dbReference type="ChEBI" id="CHEBI:59789"/>
        <dbReference type="ChEBI" id="CHEBI:78809"/>
        <dbReference type="ChEBI" id="CHEBI:83100"/>
        <dbReference type="EC" id="2.8.1.8"/>
    </reaction>
</comment>
<comment type="cofactor">
    <cofactor evidence="1">
        <name>[4Fe-4S] cluster</name>
        <dbReference type="ChEBI" id="CHEBI:49883"/>
    </cofactor>
    <text evidence="1">Binds 2 [4Fe-4S] clusters per subunit. One cluster is coordinated with 3 cysteines and an exchangeable S-adenosyl-L-methionine.</text>
</comment>
<comment type="pathway">
    <text evidence="1">Protein modification; protein lipoylation via endogenous pathway; protein N(6)-(lipoyl)lysine from octanoyl-[acyl-carrier-protein]: step 2/2.</text>
</comment>
<comment type="subcellular location">
    <subcellularLocation>
        <location evidence="1">Cytoplasm</location>
    </subcellularLocation>
</comment>
<comment type="similarity">
    <text evidence="1">Belongs to the radical SAM superfamily. Lipoyl synthase family.</text>
</comment>
<keyword id="KW-0004">4Fe-4S</keyword>
<keyword id="KW-0963">Cytoplasm</keyword>
<keyword id="KW-0408">Iron</keyword>
<keyword id="KW-0411">Iron-sulfur</keyword>
<keyword id="KW-0479">Metal-binding</keyword>
<keyword id="KW-0949">S-adenosyl-L-methionine</keyword>
<keyword id="KW-0808">Transferase</keyword>
<accession>Q57RU3</accession>
<gene>
    <name evidence="1" type="primary">lipA</name>
    <name type="ordered locus">SCH_0662</name>
</gene>
<protein>
    <recommendedName>
        <fullName evidence="1">Lipoyl synthase</fullName>
        <ecNumber evidence="1">2.8.1.8</ecNumber>
    </recommendedName>
    <alternativeName>
        <fullName evidence="1">Lip-syn</fullName>
        <shortName evidence="1">LS</shortName>
    </alternativeName>
    <alternativeName>
        <fullName evidence="1">Lipoate synthase</fullName>
    </alternativeName>
    <alternativeName>
        <fullName evidence="1">Lipoic acid synthase</fullName>
    </alternativeName>
    <alternativeName>
        <fullName evidence="1">Sulfur insertion protein LipA</fullName>
    </alternativeName>
</protein>
<reference key="1">
    <citation type="journal article" date="2005" name="Nucleic Acids Res.">
        <title>The genome sequence of Salmonella enterica serovar Choleraesuis, a highly invasive and resistant zoonotic pathogen.</title>
        <authorList>
            <person name="Chiu C.-H."/>
            <person name="Tang P."/>
            <person name="Chu C."/>
            <person name="Hu S."/>
            <person name="Bao Q."/>
            <person name="Yu J."/>
            <person name="Chou Y.-Y."/>
            <person name="Wang H.-S."/>
            <person name="Lee Y.-S."/>
        </authorList>
    </citation>
    <scope>NUCLEOTIDE SEQUENCE [LARGE SCALE GENOMIC DNA]</scope>
    <source>
        <strain>SC-B67</strain>
    </source>
</reference>
<sequence length="321" mass="36042">MSKPIVMERGVKYRDADKMALIPVKNVVTERDALLRKPEWMKIKLPADSTRIQGIKAAMRKNGLHSVCEEASCPNLAECFNHGTATFMILGAICTRRCPFCDVAHGRPVAPDAEEPQKLAQTIADMALRYVVITSVDRDDLRDGGAQHFADCITAIRAKSPEIKIETLVPDFRGRMDRALDILNATPPDVFNHNLENVPRIYRQVRPGADYNWSLKLLERFKEAHPEIPTKSGLMVGLGETNAEIIEVMRDLRRHGVTMLTLGQYLQPSRHHLPVQRYVSPEEFDEMKAEALAMGFTHAACGPFVRSSYHADLQAKGMEVK</sequence>
<organism>
    <name type="scientific">Salmonella choleraesuis (strain SC-B67)</name>
    <dbReference type="NCBI Taxonomy" id="321314"/>
    <lineage>
        <taxon>Bacteria</taxon>
        <taxon>Pseudomonadati</taxon>
        <taxon>Pseudomonadota</taxon>
        <taxon>Gammaproteobacteria</taxon>
        <taxon>Enterobacterales</taxon>
        <taxon>Enterobacteriaceae</taxon>
        <taxon>Salmonella</taxon>
    </lineage>
</organism>
<name>LIPA_SALCH</name>
<feature type="chain" id="PRO_1000012269" description="Lipoyl synthase">
    <location>
        <begin position="1"/>
        <end position="321"/>
    </location>
</feature>
<feature type="domain" description="Radical SAM core" evidence="2">
    <location>
        <begin position="80"/>
        <end position="297"/>
    </location>
</feature>
<feature type="binding site" evidence="1">
    <location>
        <position position="68"/>
    </location>
    <ligand>
        <name>[4Fe-4S] cluster</name>
        <dbReference type="ChEBI" id="CHEBI:49883"/>
        <label>1</label>
    </ligand>
</feature>
<feature type="binding site" evidence="1">
    <location>
        <position position="73"/>
    </location>
    <ligand>
        <name>[4Fe-4S] cluster</name>
        <dbReference type="ChEBI" id="CHEBI:49883"/>
        <label>1</label>
    </ligand>
</feature>
<feature type="binding site" evidence="1">
    <location>
        <position position="79"/>
    </location>
    <ligand>
        <name>[4Fe-4S] cluster</name>
        <dbReference type="ChEBI" id="CHEBI:49883"/>
        <label>1</label>
    </ligand>
</feature>
<feature type="binding site" evidence="1">
    <location>
        <position position="94"/>
    </location>
    <ligand>
        <name>[4Fe-4S] cluster</name>
        <dbReference type="ChEBI" id="CHEBI:49883"/>
        <label>2</label>
        <note>4Fe-4S-S-AdoMet</note>
    </ligand>
</feature>
<feature type="binding site" evidence="1">
    <location>
        <position position="98"/>
    </location>
    <ligand>
        <name>[4Fe-4S] cluster</name>
        <dbReference type="ChEBI" id="CHEBI:49883"/>
        <label>2</label>
        <note>4Fe-4S-S-AdoMet</note>
    </ligand>
</feature>
<feature type="binding site" evidence="1">
    <location>
        <position position="101"/>
    </location>
    <ligand>
        <name>[4Fe-4S] cluster</name>
        <dbReference type="ChEBI" id="CHEBI:49883"/>
        <label>2</label>
        <note>4Fe-4S-S-AdoMet</note>
    </ligand>
</feature>
<feature type="binding site" evidence="1">
    <location>
        <position position="308"/>
    </location>
    <ligand>
        <name>[4Fe-4S] cluster</name>
        <dbReference type="ChEBI" id="CHEBI:49883"/>
        <label>1</label>
    </ligand>
</feature>
<dbReference type="EC" id="2.8.1.8" evidence="1"/>
<dbReference type="EMBL" id="AE017220">
    <property type="protein sequence ID" value="AAX64568.1"/>
    <property type="molecule type" value="Genomic_DNA"/>
</dbReference>
<dbReference type="RefSeq" id="WP_000042640.1">
    <property type="nucleotide sequence ID" value="NC_006905.1"/>
</dbReference>
<dbReference type="SMR" id="Q57RU3"/>
<dbReference type="KEGG" id="sec:SCH_0662"/>
<dbReference type="HOGENOM" id="CLU_033144_2_1_6"/>
<dbReference type="UniPathway" id="UPA00538">
    <property type="reaction ID" value="UER00593"/>
</dbReference>
<dbReference type="Proteomes" id="UP000000538">
    <property type="component" value="Chromosome"/>
</dbReference>
<dbReference type="GO" id="GO:0005737">
    <property type="term" value="C:cytoplasm"/>
    <property type="evidence" value="ECO:0007669"/>
    <property type="project" value="UniProtKB-SubCell"/>
</dbReference>
<dbReference type="GO" id="GO:0051539">
    <property type="term" value="F:4 iron, 4 sulfur cluster binding"/>
    <property type="evidence" value="ECO:0007669"/>
    <property type="project" value="UniProtKB-UniRule"/>
</dbReference>
<dbReference type="GO" id="GO:0016992">
    <property type="term" value="F:lipoate synthase activity"/>
    <property type="evidence" value="ECO:0007669"/>
    <property type="project" value="UniProtKB-UniRule"/>
</dbReference>
<dbReference type="GO" id="GO:0046872">
    <property type="term" value="F:metal ion binding"/>
    <property type="evidence" value="ECO:0007669"/>
    <property type="project" value="UniProtKB-KW"/>
</dbReference>
<dbReference type="CDD" id="cd01335">
    <property type="entry name" value="Radical_SAM"/>
    <property type="match status" value="1"/>
</dbReference>
<dbReference type="FunFam" id="3.20.20.70:FF:000023">
    <property type="entry name" value="Lipoyl synthase"/>
    <property type="match status" value="1"/>
</dbReference>
<dbReference type="Gene3D" id="3.20.20.70">
    <property type="entry name" value="Aldolase class I"/>
    <property type="match status" value="1"/>
</dbReference>
<dbReference type="HAMAP" id="MF_00206">
    <property type="entry name" value="Lipoyl_synth"/>
    <property type="match status" value="1"/>
</dbReference>
<dbReference type="InterPro" id="IPR013785">
    <property type="entry name" value="Aldolase_TIM"/>
</dbReference>
<dbReference type="InterPro" id="IPR006638">
    <property type="entry name" value="Elp3/MiaA/NifB-like_rSAM"/>
</dbReference>
<dbReference type="InterPro" id="IPR031691">
    <property type="entry name" value="LIAS_N"/>
</dbReference>
<dbReference type="InterPro" id="IPR003698">
    <property type="entry name" value="Lipoyl_synth"/>
</dbReference>
<dbReference type="InterPro" id="IPR007197">
    <property type="entry name" value="rSAM"/>
</dbReference>
<dbReference type="NCBIfam" id="TIGR00510">
    <property type="entry name" value="lipA"/>
    <property type="match status" value="1"/>
</dbReference>
<dbReference type="NCBIfam" id="NF004019">
    <property type="entry name" value="PRK05481.1"/>
    <property type="match status" value="1"/>
</dbReference>
<dbReference type="NCBIfam" id="NF009544">
    <property type="entry name" value="PRK12928.1"/>
    <property type="match status" value="1"/>
</dbReference>
<dbReference type="PANTHER" id="PTHR10949">
    <property type="entry name" value="LIPOYL SYNTHASE"/>
    <property type="match status" value="1"/>
</dbReference>
<dbReference type="PANTHER" id="PTHR10949:SF0">
    <property type="entry name" value="LIPOYL SYNTHASE, MITOCHONDRIAL"/>
    <property type="match status" value="1"/>
</dbReference>
<dbReference type="Pfam" id="PF16881">
    <property type="entry name" value="LIAS_N"/>
    <property type="match status" value="1"/>
</dbReference>
<dbReference type="Pfam" id="PF04055">
    <property type="entry name" value="Radical_SAM"/>
    <property type="match status" value="1"/>
</dbReference>
<dbReference type="PIRSF" id="PIRSF005963">
    <property type="entry name" value="Lipoyl_synth"/>
    <property type="match status" value="1"/>
</dbReference>
<dbReference type="SFLD" id="SFLDF00271">
    <property type="entry name" value="lipoyl_synthase"/>
    <property type="match status" value="1"/>
</dbReference>
<dbReference type="SFLD" id="SFLDS00029">
    <property type="entry name" value="Radical_SAM"/>
    <property type="match status" value="1"/>
</dbReference>
<dbReference type="SMART" id="SM00729">
    <property type="entry name" value="Elp3"/>
    <property type="match status" value="1"/>
</dbReference>
<dbReference type="SUPFAM" id="SSF102114">
    <property type="entry name" value="Radical SAM enzymes"/>
    <property type="match status" value="1"/>
</dbReference>
<dbReference type="PROSITE" id="PS51918">
    <property type="entry name" value="RADICAL_SAM"/>
    <property type="match status" value="1"/>
</dbReference>
<proteinExistence type="inferred from homology"/>